<feature type="chain" id="PRO_1000213707" description="tRNA(Ile)-lysidine synthase">
    <location>
        <begin position="1"/>
        <end position="321"/>
    </location>
</feature>
<feature type="binding site" evidence="1">
    <location>
        <begin position="30"/>
        <end position="35"/>
    </location>
    <ligand>
        <name>ATP</name>
        <dbReference type="ChEBI" id="CHEBI:30616"/>
    </ligand>
</feature>
<organism>
    <name type="scientific">Chlamydia trachomatis serovar L2 (strain ATCC VR-902B / DSM 19102 / 434/Bu)</name>
    <dbReference type="NCBI Taxonomy" id="471472"/>
    <lineage>
        <taxon>Bacteria</taxon>
        <taxon>Pseudomonadati</taxon>
        <taxon>Chlamydiota</taxon>
        <taxon>Chlamydiia</taxon>
        <taxon>Chlamydiales</taxon>
        <taxon>Chlamydiaceae</taxon>
        <taxon>Chlamydia/Chlamydophila group</taxon>
        <taxon>Chlamydia</taxon>
    </lineage>
</organism>
<gene>
    <name evidence="1" type="primary">tilS</name>
    <name type="ordered locus">CTL0212</name>
</gene>
<dbReference type="EC" id="6.3.4.19" evidence="1"/>
<dbReference type="EMBL" id="AM884176">
    <property type="protein sequence ID" value="CAP03656.1"/>
    <property type="molecule type" value="Genomic_DNA"/>
</dbReference>
<dbReference type="RefSeq" id="WP_009873449.1">
    <property type="nucleotide sequence ID" value="NC_010287.1"/>
</dbReference>
<dbReference type="RefSeq" id="YP_001654302.1">
    <property type="nucleotide sequence ID" value="NC_010287.1"/>
</dbReference>
<dbReference type="SMR" id="B0B969"/>
<dbReference type="KEGG" id="ctb:CTL0212"/>
<dbReference type="PATRIC" id="fig|471472.4.peg.229"/>
<dbReference type="HOGENOM" id="CLU_870675_0_0_0"/>
<dbReference type="Proteomes" id="UP001154402">
    <property type="component" value="Chromosome"/>
</dbReference>
<dbReference type="GO" id="GO:0005737">
    <property type="term" value="C:cytoplasm"/>
    <property type="evidence" value="ECO:0007669"/>
    <property type="project" value="UniProtKB-SubCell"/>
</dbReference>
<dbReference type="GO" id="GO:0005524">
    <property type="term" value="F:ATP binding"/>
    <property type="evidence" value="ECO:0007669"/>
    <property type="project" value="UniProtKB-UniRule"/>
</dbReference>
<dbReference type="GO" id="GO:0032267">
    <property type="term" value="F:tRNA(Ile)-lysidine synthase activity"/>
    <property type="evidence" value="ECO:0007669"/>
    <property type="project" value="UniProtKB-EC"/>
</dbReference>
<dbReference type="GO" id="GO:0006400">
    <property type="term" value="P:tRNA modification"/>
    <property type="evidence" value="ECO:0007669"/>
    <property type="project" value="UniProtKB-UniRule"/>
</dbReference>
<dbReference type="CDD" id="cd01992">
    <property type="entry name" value="TilS_N"/>
    <property type="match status" value="1"/>
</dbReference>
<dbReference type="Gene3D" id="3.40.50.620">
    <property type="entry name" value="HUPs"/>
    <property type="match status" value="1"/>
</dbReference>
<dbReference type="HAMAP" id="MF_01161">
    <property type="entry name" value="tRNA_Ile_lys_synt"/>
    <property type="match status" value="1"/>
</dbReference>
<dbReference type="InterPro" id="IPR014729">
    <property type="entry name" value="Rossmann-like_a/b/a_fold"/>
</dbReference>
<dbReference type="InterPro" id="IPR011063">
    <property type="entry name" value="TilS/TtcA_N"/>
</dbReference>
<dbReference type="InterPro" id="IPR012094">
    <property type="entry name" value="tRNA_Ile_lys_synt"/>
</dbReference>
<dbReference type="InterPro" id="IPR012795">
    <property type="entry name" value="tRNA_Ile_lys_synt_N"/>
</dbReference>
<dbReference type="NCBIfam" id="TIGR02432">
    <property type="entry name" value="lysidine_TilS_N"/>
    <property type="match status" value="1"/>
</dbReference>
<dbReference type="PANTHER" id="PTHR43033">
    <property type="entry name" value="TRNA(ILE)-LYSIDINE SYNTHASE-RELATED"/>
    <property type="match status" value="1"/>
</dbReference>
<dbReference type="PANTHER" id="PTHR43033:SF1">
    <property type="entry name" value="TRNA(ILE)-LYSIDINE SYNTHASE-RELATED"/>
    <property type="match status" value="1"/>
</dbReference>
<dbReference type="Pfam" id="PF01171">
    <property type="entry name" value="ATP_bind_3"/>
    <property type="match status" value="1"/>
</dbReference>
<dbReference type="SUPFAM" id="SSF52402">
    <property type="entry name" value="Adenine nucleotide alpha hydrolases-like"/>
    <property type="match status" value="1"/>
</dbReference>
<protein>
    <recommendedName>
        <fullName evidence="1">tRNA(Ile)-lysidine synthase</fullName>
        <ecNumber evidence="1">6.3.4.19</ecNumber>
    </recommendedName>
    <alternativeName>
        <fullName evidence="1">tRNA(Ile)-2-lysyl-cytidine synthase</fullName>
    </alternativeName>
    <alternativeName>
        <fullName evidence="1">tRNA(Ile)-lysidine synthetase</fullName>
    </alternativeName>
</protein>
<accession>B0B969</accession>
<proteinExistence type="inferred from homology"/>
<name>TILS_CHLT2</name>
<reference key="1">
    <citation type="journal article" date="2008" name="Genome Res.">
        <title>Chlamydia trachomatis: genome sequence analysis of lymphogranuloma venereum isolates.</title>
        <authorList>
            <person name="Thomson N.R."/>
            <person name="Holden M.T.G."/>
            <person name="Carder C."/>
            <person name="Lennard N."/>
            <person name="Lockey S.J."/>
            <person name="Marsh P."/>
            <person name="Skipp P."/>
            <person name="O'Connor C.D."/>
            <person name="Goodhead I."/>
            <person name="Norbertzcak H."/>
            <person name="Harris B."/>
            <person name="Ormond D."/>
            <person name="Rance R."/>
            <person name="Quail M.A."/>
            <person name="Parkhill J."/>
            <person name="Stephens R.S."/>
            <person name="Clarke I.N."/>
        </authorList>
    </citation>
    <scope>NUCLEOTIDE SEQUENCE [LARGE SCALE GENOMIC DNA]</scope>
    <source>
        <strain>ATCC VR-902B / DSM 19102 / 434/Bu</strain>
    </source>
</reference>
<evidence type="ECO:0000255" key="1">
    <source>
        <dbReference type="HAMAP-Rule" id="MF_01161"/>
    </source>
</evidence>
<sequence>MITRLFENDKQLEGFFSSLDKKKKYLLALSGGSDSLFLMYLLKSRAIFFTAVHVDYGWRETSYQEASDLAALCEQEQIPFILDRPEATDPMDSRDIENAARRYRYELFYRLCKEKCFSGVFLGHHADDQAETILKRVFEGAHLGNLKGMSAQVMYRDVALLRPLLHIPKHKIVEALDSHQVQYVQDITNCNERFLRARMRERLFPYLQDVFGKNIRDPLLSLAGDSAELREYLDQQTAPFLLRVVDNERGKLLPIEQELLKTPFLAKWVCKQFFLNEGLVASKSFLQTVYDHLMTGSTARLRLRNRTVLVKARGVIIESIY</sequence>
<keyword id="KW-0067">ATP-binding</keyword>
<keyword id="KW-0963">Cytoplasm</keyword>
<keyword id="KW-0436">Ligase</keyword>
<keyword id="KW-0547">Nucleotide-binding</keyword>
<keyword id="KW-0819">tRNA processing</keyword>
<comment type="function">
    <text evidence="1">Ligates lysine onto the cytidine present at position 34 of the AUA codon-specific tRNA(Ile) that contains the anticodon CAU, in an ATP-dependent manner. Cytidine is converted to lysidine, thus changing the amino acid specificity of the tRNA from methionine to isoleucine.</text>
</comment>
<comment type="catalytic activity">
    <reaction evidence="1">
        <text>cytidine(34) in tRNA(Ile2) + L-lysine + ATP = lysidine(34) in tRNA(Ile2) + AMP + diphosphate + H(+)</text>
        <dbReference type="Rhea" id="RHEA:43744"/>
        <dbReference type="Rhea" id="RHEA-COMP:10625"/>
        <dbReference type="Rhea" id="RHEA-COMP:10670"/>
        <dbReference type="ChEBI" id="CHEBI:15378"/>
        <dbReference type="ChEBI" id="CHEBI:30616"/>
        <dbReference type="ChEBI" id="CHEBI:32551"/>
        <dbReference type="ChEBI" id="CHEBI:33019"/>
        <dbReference type="ChEBI" id="CHEBI:82748"/>
        <dbReference type="ChEBI" id="CHEBI:83665"/>
        <dbReference type="ChEBI" id="CHEBI:456215"/>
        <dbReference type="EC" id="6.3.4.19"/>
    </reaction>
</comment>
<comment type="subcellular location">
    <subcellularLocation>
        <location evidence="1">Cytoplasm</location>
    </subcellularLocation>
</comment>
<comment type="domain">
    <text>The N-terminal region contains the highly conserved SGGXDS motif, predicted to be a P-loop motif involved in ATP binding.</text>
</comment>
<comment type="similarity">
    <text evidence="1">Belongs to the tRNA(Ile)-lysidine synthase family.</text>
</comment>